<reference key="1">
    <citation type="journal article" date="2001" name="Proc. Natl. Acad. Sci. U.S.A.">
        <title>Complete genomic sequence of Pasteurella multocida Pm70.</title>
        <authorList>
            <person name="May B.J."/>
            <person name="Zhang Q."/>
            <person name="Li L.L."/>
            <person name="Paustian M.L."/>
            <person name="Whittam T.S."/>
            <person name="Kapur V."/>
        </authorList>
    </citation>
    <scope>NUCLEOTIDE SEQUENCE [LARGE SCALE GENOMIC DNA]</scope>
    <source>
        <strain>Pm70</strain>
    </source>
</reference>
<sequence>MQHYHFSHSLLAQQEKPYRFPCPAKLNLFLYINGKRQDGYHELQTLFQFVDFGDWLDIEVREDNEICLTPELPSLKNEDNLVYRAAKLLQQKTNCALGANLTLDKILPMGSGLGGGSSNAATALVALNYLWNTQLSTKQLAKLGLMLGADVPIFVHGHAAFAEGVGEKITYCEPKEKWYVVLKPNVSISTATVFSDPDLIRNTPKQSLEQLLNQKYANDCEKVVLNHYPEVEEILHRLLQYAPSRLTGTGACVFAEFNDEESAQLAFQTIPKNYFGFVAQGLNKSPLHNMLAKIS</sequence>
<name>ISPE_PASMU</name>
<accession>P57833</accession>
<protein>
    <recommendedName>
        <fullName evidence="1">4-diphosphocytidyl-2-C-methyl-D-erythritol kinase</fullName>
        <shortName evidence="1">CMK</shortName>
        <ecNumber evidence="1">2.7.1.148</ecNumber>
    </recommendedName>
    <alternativeName>
        <fullName evidence="1">4-(cytidine-5'-diphospho)-2-C-methyl-D-erythritol kinase</fullName>
    </alternativeName>
</protein>
<keyword id="KW-0067">ATP-binding</keyword>
<keyword id="KW-0414">Isoprene biosynthesis</keyword>
<keyword id="KW-0418">Kinase</keyword>
<keyword id="KW-0547">Nucleotide-binding</keyword>
<keyword id="KW-1185">Reference proteome</keyword>
<keyword id="KW-0808">Transferase</keyword>
<dbReference type="EC" id="2.7.1.148" evidence="1"/>
<dbReference type="EMBL" id="AE004439">
    <property type="protein sequence ID" value="AAK02329.1"/>
    <property type="molecule type" value="Genomic_DNA"/>
</dbReference>
<dbReference type="RefSeq" id="WP_005724298.1">
    <property type="nucleotide sequence ID" value="NC_002663.1"/>
</dbReference>
<dbReference type="SMR" id="P57833"/>
<dbReference type="STRING" id="272843.PM0245"/>
<dbReference type="EnsemblBacteria" id="AAK02329">
    <property type="protein sequence ID" value="AAK02329"/>
    <property type="gene ID" value="PM0245"/>
</dbReference>
<dbReference type="GeneID" id="77207598"/>
<dbReference type="KEGG" id="pmu:PM0245"/>
<dbReference type="PATRIC" id="fig|272843.6.peg.253"/>
<dbReference type="HOGENOM" id="CLU_053057_3_0_6"/>
<dbReference type="OrthoDB" id="9809438at2"/>
<dbReference type="UniPathway" id="UPA00056">
    <property type="reaction ID" value="UER00094"/>
</dbReference>
<dbReference type="Proteomes" id="UP000000809">
    <property type="component" value="Chromosome"/>
</dbReference>
<dbReference type="GO" id="GO:0050515">
    <property type="term" value="F:4-(cytidine 5'-diphospho)-2-C-methyl-D-erythritol kinase activity"/>
    <property type="evidence" value="ECO:0007669"/>
    <property type="project" value="UniProtKB-UniRule"/>
</dbReference>
<dbReference type="GO" id="GO:0005524">
    <property type="term" value="F:ATP binding"/>
    <property type="evidence" value="ECO:0007669"/>
    <property type="project" value="UniProtKB-UniRule"/>
</dbReference>
<dbReference type="GO" id="GO:0019288">
    <property type="term" value="P:isopentenyl diphosphate biosynthetic process, methylerythritol 4-phosphate pathway"/>
    <property type="evidence" value="ECO:0007669"/>
    <property type="project" value="UniProtKB-UniRule"/>
</dbReference>
<dbReference type="GO" id="GO:0016114">
    <property type="term" value="P:terpenoid biosynthetic process"/>
    <property type="evidence" value="ECO:0007669"/>
    <property type="project" value="InterPro"/>
</dbReference>
<dbReference type="FunFam" id="3.30.230.10:FF:000022">
    <property type="entry name" value="4-diphosphocytidyl-2-C-methyl-D-erythritol kinase"/>
    <property type="match status" value="1"/>
</dbReference>
<dbReference type="Gene3D" id="3.30.230.10">
    <property type="match status" value="1"/>
</dbReference>
<dbReference type="Gene3D" id="3.30.70.890">
    <property type="entry name" value="GHMP kinase, C-terminal domain"/>
    <property type="match status" value="1"/>
</dbReference>
<dbReference type="HAMAP" id="MF_00061">
    <property type="entry name" value="IspE"/>
    <property type="match status" value="1"/>
</dbReference>
<dbReference type="InterPro" id="IPR013750">
    <property type="entry name" value="GHMP_kinase_C_dom"/>
</dbReference>
<dbReference type="InterPro" id="IPR036554">
    <property type="entry name" value="GHMP_kinase_C_sf"/>
</dbReference>
<dbReference type="InterPro" id="IPR006204">
    <property type="entry name" value="GHMP_kinase_N_dom"/>
</dbReference>
<dbReference type="InterPro" id="IPR004424">
    <property type="entry name" value="IspE"/>
</dbReference>
<dbReference type="InterPro" id="IPR020568">
    <property type="entry name" value="Ribosomal_Su5_D2-typ_SF"/>
</dbReference>
<dbReference type="InterPro" id="IPR014721">
    <property type="entry name" value="Ribsml_uS5_D2-typ_fold_subgr"/>
</dbReference>
<dbReference type="NCBIfam" id="TIGR00154">
    <property type="entry name" value="ispE"/>
    <property type="match status" value="1"/>
</dbReference>
<dbReference type="PANTHER" id="PTHR43527">
    <property type="entry name" value="4-DIPHOSPHOCYTIDYL-2-C-METHYL-D-ERYTHRITOL KINASE, CHLOROPLASTIC"/>
    <property type="match status" value="1"/>
</dbReference>
<dbReference type="PANTHER" id="PTHR43527:SF2">
    <property type="entry name" value="4-DIPHOSPHOCYTIDYL-2-C-METHYL-D-ERYTHRITOL KINASE, CHLOROPLASTIC"/>
    <property type="match status" value="1"/>
</dbReference>
<dbReference type="Pfam" id="PF08544">
    <property type="entry name" value="GHMP_kinases_C"/>
    <property type="match status" value="1"/>
</dbReference>
<dbReference type="Pfam" id="PF00288">
    <property type="entry name" value="GHMP_kinases_N"/>
    <property type="match status" value="1"/>
</dbReference>
<dbReference type="PIRSF" id="PIRSF010376">
    <property type="entry name" value="IspE"/>
    <property type="match status" value="1"/>
</dbReference>
<dbReference type="SUPFAM" id="SSF55060">
    <property type="entry name" value="GHMP Kinase, C-terminal domain"/>
    <property type="match status" value="1"/>
</dbReference>
<dbReference type="SUPFAM" id="SSF54211">
    <property type="entry name" value="Ribosomal protein S5 domain 2-like"/>
    <property type="match status" value="1"/>
</dbReference>
<proteinExistence type="inferred from homology"/>
<gene>
    <name evidence="1" type="primary">ispE</name>
    <name type="ordered locus">PM0245</name>
</gene>
<evidence type="ECO:0000255" key="1">
    <source>
        <dbReference type="HAMAP-Rule" id="MF_00061"/>
    </source>
</evidence>
<organism>
    <name type="scientific">Pasteurella multocida (strain Pm70)</name>
    <dbReference type="NCBI Taxonomy" id="272843"/>
    <lineage>
        <taxon>Bacteria</taxon>
        <taxon>Pseudomonadati</taxon>
        <taxon>Pseudomonadota</taxon>
        <taxon>Gammaproteobacteria</taxon>
        <taxon>Pasteurellales</taxon>
        <taxon>Pasteurellaceae</taxon>
        <taxon>Pasteurella</taxon>
    </lineage>
</organism>
<feature type="chain" id="PRO_0000189242" description="4-diphosphocytidyl-2-C-methyl-D-erythritol kinase">
    <location>
        <begin position="1"/>
        <end position="295"/>
    </location>
</feature>
<feature type="active site" evidence="1">
    <location>
        <position position="25"/>
    </location>
</feature>
<feature type="active site" evidence="1">
    <location>
        <position position="150"/>
    </location>
</feature>
<feature type="binding site" evidence="1">
    <location>
        <begin position="108"/>
        <end position="118"/>
    </location>
    <ligand>
        <name>ATP</name>
        <dbReference type="ChEBI" id="CHEBI:30616"/>
    </ligand>
</feature>
<comment type="function">
    <text evidence="1">Catalyzes the phosphorylation of the position 2 hydroxy group of 4-diphosphocytidyl-2C-methyl-D-erythritol.</text>
</comment>
<comment type="catalytic activity">
    <reaction evidence="1">
        <text>4-CDP-2-C-methyl-D-erythritol + ATP = 4-CDP-2-C-methyl-D-erythritol 2-phosphate + ADP + H(+)</text>
        <dbReference type="Rhea" id="RHEA:18437"/>
        <dbReference type="ChEBI" id="CHEBI:15378"/>
        <dbReference type="ChEBI" id="CHEBI:30616"/>
        <dbReference type="ChEBI" id="CHEBI:57823"/>
        <dbReference type="ChEBI" id="CHEBI:57919"/>
        <dbReference type="ChEBI" id="CHEBI:456216"/>
        <dbReference type="EC" id="2.7.1.148"/>
    </reaction>
</comment>
<comment type="pathway">
    <text evidence="1">Isoprenoid biosynthesis; isopentenyl diphosphate biosynthesis via DXP pathway; isopentenyl diphosphate from 1-deoxy-D-xylulose 5-phosphate: step 3/6.</text>
</comment>
<comment type="similarity">
    <text evidence="1">Belongs to the GHMP kinase family. IspE subfamily.</text>
</comment>